<sequence>MSQVYSVAVVVGSLRKESYNRKVARALSELAPSSLALKIVEIGDLPLYNEDIEAEAPPETWKRFRDEIRRSDAVLFVTPEYNRSVPGCLKNAIDVGSRPYGQSAWSGKPTAVVSVSPGAIGGFGANHAVRQSLVFLDMPCMQMPEAYLGGAASLFEDSGKLNDKTRPFLQAFVDRFASWVKLNRAV</sequence>
<protein>
    <recommendedName>
        <fullName evidence="5">Quinone reductase</fullName>
        <ecNumber evidence="3">1.6.5.2</ecNumber>
    </recommendedName>
    <alternativeName>
        <fullName evidence="5">Chromate reductase</fullName>
        <shortName>CHRR</shortName>
        <ecNumber evidence="2">1.6.-.-</ecNumber>
    </alternativeName>
    <alternativeName>
        <fullName evidence="5">NAD(P)H dehydrogenase (quinone)</fullName>
    </alternativeName>
</protein>
<organism>
    <name type="scientific">Pseudomonas putida (strain ATCC 47054 / DSM 6125 / CFBP 8728 / NCIMB 11950 / KT2440)</name>
    <dbReference type="NCBI Taxonomy" id="160488"/>
    <lineage>
        <taxon>Bacteria</taxon>
        <taxon>Pseudomonadati</taxon>
        <taxon>Pseudomonadota</taxon>
        <taxon>Gammaproteobacteria</taxon>
        <taxon>Pseudomonadales</taxon>
        <taxon>Pseudomonadaceae</taxon>
        <taxon>Pseudomonas</taxon>
    </lineage>
</organism>
<gene>
    <name evidence="4" type="primary">chrR</name>
    <name type="ordered locus">PP_4138</name>
</gene>
<reference key="1">
    <citation type="journal article" date="2004" name="Appl. Environ. Microbiol.">
        <title>Chromate-reducing properties of soluble flavoproteins from Pseudomonas putida and Escherichia coli.</title>
        <authorList>
            <person name="Ackerley D.F."/>
            <person name="Gonzalez C.F."/>
            <person name="Park C.H."/>
            <person name="Blake R. II"/>
            <person name="Keyhan M."/>
            <person name="Matin A."/>
        </authorList>
    </citation>
    <scope>NUCLEOTIDE SEQUENCE [GENOMIC DNA]</scope>
    <scope>FUNCTION</scope>
    <scope>CATALYTIC ACTIVITY</scope>
    <scope>BIOPHYSICOCHEMICAL PROPERTIES</scope>
    <scope>SUBSTRATE SPECIFICITY</scope>
    <scope>DISRUPTION PHENOTYPE</scope>
    <scope>ACTIVITY REGULATION</scope>
    <scope>INDUCTION</scope>
    <scope>COFACTOR</scope>
    <source>
        <strain>ATCC 47054 / DSM 6125 / CFBP 8728 / NCIMB 11950 / KT2440</strain>
    </source>
</reference>
<reference key="2">
    <citation type="journal article" date="2002" name="Environ. Microbiol.">
        <title>Complete genome sequence and comparative analysis of the metabolically versatile Pseudomonas putida KT2440.</title>
        <authorList>
            <person name="Nelson K.E."/>
            <person name="Weinel C."/>
            <person name="Paulsen I.T."/>
            <person name="Dodson R.J."/>
            <person name="Hilbert H."/>
            <person name="Martins dos Santos V.A.P."/>
            <person name="Fouts D.E."/>
            <person name="Gill S.R."/>
            <person name="Pop M."/>
            <person name="Holmes M."/>
            <person name="Brinkac L.M."/>
            <person name="Beanan M.J."/>
            <person name="DeBoy R.T."/>
            <person name="Daugherty S.C."/>
            <person name="Kolonay J.F."/>
            <person name="Madupu R."/>
            <person name="Nelson W.C."/>
            <person name="White O."/>
            <person name="Peterson J.D."/>
            <person name="Khouri H.M."/>
            <person name="Hance I."/>
            <person name="Chris Lee P."/>
            <person name="Holtzapple E.K."/>
            <person name="Scanlan D."/>
            <person name="Tran K."/>
            <person name="Moazzez A."/>
            <person name="Utterback T.R."/>
            <person name="Rizzo M."/>
            <person name="Lee K."/>
            <person name="Kosack D."/>
            <person name="Moestl D."/>
            <person name="Wedler H."/>
            <person name="Lauber J."/>
            <person name="Stjepandic D."/>
            <person name="Hoheisel J."/>
            <person name="Straetz M."/>
            <person name="Heim S."/>
            <person name="Kiewitz C."/>
            <person name="Eisen J.A."/>
            <person name="Timmis K.N."/>
            <person name="Duesterhoeft A."/>
            <person name="Tuemmler B."/>
            <person name="Fraser C.M."/>
        </authorList>
    </citation>
    <scope>NUCLEOTIDE SEQUENCE [LARGE SCALE GENOMIC DNA]</scope>
    <source>
        <strain>ATCC 47054 / DSM 6125 / CFBP 8728 / NCIMB 11950 / KT2440</strain>
    </source>
</reference>
<reference key="3">
    <citation type="journal article" date="2005" name="J. Biol. Chem.">
        <title>ChrR, a soluble quinone reductase of Pseudomonas putida that defends against H2O2.</title>
        <authorList>
            <person name="Gonzalez C.F."/>
            <person name="Ackerley D.F."/>
            <person name="Lynch S.V."/>
            <person name="Matin A."/>
        </authorList>
    </citation>
    <scope>FUNCTION</scope>
    <scope>CATALYTIC ACTIVITY</scope>
    <scope>BIOPHYSICOCHEMICAL PROPERTIES</scope>
    <scope>INDUCTION</scope>
</reference>
<evidence type="ECO:0000250" key="1">
    <source>
        <dbReference type="UniProtKB" id="P0AGE6"/>
    </source>
</evidence>
<evidence type="ECO:0000269" key="2">
    <source>
    </source>
</evidence>
<evidence type="ECO:0000269" key="3">
    <source>
    </source>
</evidence>
<evidence type="ECO:0000303" key="4">
    <source>
    </source>
</evidence>
<evidence type="ECO:0000305" key="5"/>
<dbReference type="EC" id="1.6.5.2" evidence="3"/>
<dbReference type="EC" id="1.6.-.-" evidence="2"/>
<dbReference type="EMBL" id="AF375642">
    <property type="protein sequence ID" value="AAK56853.1"/>
    <property type="molecule type" value="Genomic_DNA"/>
</dbReference>
<dbReference type="EMBL" id="AE015451">
    <property type="protein sequence ID" value="AAN69721.1"/>
    <property type="molecule type" value="Genomic_DNA"/>
</dbReference>
<dbReference type="RefSeq" id="NP_746257.1">
    <property type="nucleotide sequence ID" value="NC_002947.4"/>
</dbReference>
<dbReference type="RefSeq" id="WP_003251456.1">
    <property type="nucleotide sequence ID" value="NZ_CP169744.1"/>
</dbReference>
<dbReference type="SMR" id="Q88FF8"/>
<dbReference type="STRING" id="160488.PP_4138"/>
<dbReference type="PaxDb" id="160488-PP_4138"/>
<dbReference type="GeneID" id="83679172"/>
<dbReference type="KEGG" id="ppu:PP_4138"/>
<dbReference type="PATRIC" id="fig|160488.4.peg.4397"/>
<dbReference type="eggNOG" id="COG0431">
    <property type="taxonomic scope" value="Bacteria"/>
</dbReference>
<dbReference type="HOGENOM" id="CLU_055322_4_2_6"/>
<dbReference type="OrthoDB" id="9812295at2"/>
<dbReference type="PhylomeDB" id="Q88FF8"/>
<dbReference type="BioCyc" id="MetaCyc:G1G01-4405-MONOMER"/>
<dbReference type="BioCyc" id="PPUT160488:G1G01-4405-MONOMER"/>
<dbReference type="Proteomes" id="UP000000556">
    <property type="component" value="Chromosome"/>
</dbReference>
<dbReference type="GO" id="GO:0005829">
    <property type="term" value="C:cytosol"/>
    <property type="evidence" value="ECO:0007669"/>
    <property type="project" value="TreeGrafter"/>
</dbReference>
<dbReference type="GO" id="GO:0010181">
    <property type="term" value="F:FMN binding"/>
    <property type="evidence" value="ECO:0007669"/>
    <property type="project" value="TreeGrafter"/>
</dbReference>
<dbReference type="GO" id="GO:0050136">
    <property type="term" value="F:NADH:ubiquinone reductase (non-electrogenic) activity"/>
    <property type="evidence" value="ECO:0007669"/>
    <property type="project" value="RHEA"/>
</dbReference>
<dbReference type="GO" id="GO:0008753">
    <property type="term" value="F:NADPH dehydrogenase (quinone) activity"/>
    <property type="evidence" value="ECO:0007669"/>
    <property type="project" value="RHEA"/>
</dbReference>
<dbReference type="Gene3D" id="3.40.50.360">
    <property type="match status" value="1"/>
</dbReference>
<dbReference type="InterPro" id="IPR029039">
    <property type="entry name" value="Flavoprotein-like_sf"/>
</dbReference>
<dbReference type="InterPro" id="IPR005025">
    <property type="entry name" value="FMN_Rdtase-like_dom"/>
</dbReference>
<dbReference type="InterPro" id="IPR050712">
    <property type="entry name" value="NAD(P)H-dep_reductase"/>
</dbReference>
<dbReference type="PANTHER" id="PTHR30543">
    <property type="entry name" value="CHROMATE REDUCTASE"/>
    <property type="match status" value="1"/>
</dbReference>
<dbReference type="PANTHER" id="PTHR30543:SF21">
    <property type="entry name" value="NAD(P)H-DEPENDENT FMN REDUCTASE LOT6"/>
    <property type="match status" value="1"/>
</dbReference>
<dbReference type="Pfam" id="PF03358">
    <property type="entry name" value="FMN_red"/>
    <property type="match status" value="1"/>
</dbReference>
<dbReference type="SUPFAM" id="SSF52218">
    <property type="entry name" value="Flavoproteins"/>
    <property type="match status" value="1"/>
</dbReference>
<feature type="chain" id="PRO_0000430015" description="Quinone reductase">
    <location>
        <begin position="1"/>
        <end position="186"/>
    </location>
</feature>
<feature type="binding site" evidence="1">
    <location>
        <begin position="13"/>
        <end position="20"/>
    </location>
    <ligand>
        <name>FMN</name>
        <dbReference type="ChEBI" id="CHEBI:58210"/>
    </ligand>
</feature>
<feature type="binding site" evidence="1">
    <location>
        <begin position="80"/>
        <end position="83"/>
    </location>
    <ligand>
        <name>FMN</name>
        <dbReference type="ChEBI" id="CHEBI:58210"/>
    </ligand>
</feature>
<feature type="binding site" evidence="1">
    <location>
        <position position="116"/>
    </location>
    <ligand>
        <name>FMN</name>
        <dbReference type="ChEBI" id="CHEBI:58210"/>
    </ligand>
</feature>
<accession>Q88FF8</accession>
<accession>Q7BD45</accession>
<accession>Q93T19</accession>
<proteinExistence type="evidence at protein level"/>
<keyword id="KW-0285">Flavoprotein</keyword>
<keyword id="KW-0288">FMN</keyword>
<keyword id="KW-0520">NAD</keyword>
<keyword id="KW-0521">NADP</keyword>
<keyword id="KW-0560">Oxidoreductase</keyword>
<keyword id="KW-1185">Reference proteome</keyword>
<name>CHRR_PSEPK</name>
<comment type="function">
    <text evidence="2 3">Catalyzes the reduction of quinones. Acts by simultaneous two-electron transfer, avoiding formation of highly reactive semiquinone intermediates and producing quinols that promote tolerance of H(2)O(2). Quinone reduction is probably the primary biological role of ChrR (PubMed:15840577). Can also reduce toxic chromate to insoluble and less toxic Cr(3+). Catalyzes the transfer of three electrons to Cr(6+) producing Cr(3+) and one electron to molecular oxygen. This reaction produces transiently a minimal amount of the toxic Cr(5+) species and reactive oxygen species (ROS). Chromate reduction protects the cell against chromate toxicity, but is likely a secondary activity (PubMed:14766567, PubMed:15840577). Can also reduce potassium ferricyanide and 2,6-dichloroindophenol (PubMed:14766567). During chromate reduction, displays an eightfold preference for NADH over NADPH (PubMed:14766567).</text>
</comment>
<comment type="catalytic activity">
    <reaction evidence="3">
        <text>a quinone + NADH + H(+) = a quinol + NAD(+)</text>
        <dbReference type="Rhea" id="RHEA:46160"/>
        <dbReference type="ChEBI" id="CHEBI:15378"/>
        <dbReference type="ChEBI" id="CHEBI:24646"/>
        <dbReference type="ChEBI" id="CHEBI:57540"/>
        <dbReference type="ChEBI" id="CHEBI:57945"/>
        <dbReference type="ChEBI" id="CHEBI:132124"/>
        <dbReference type="EC" id="1.6.5.2"/>
    </reaction>
</comment>
<comment type="catalytic activity">
    <reaction evidence="3">
        <text>a quinone + NADPH + H(+) = a quinol + NADP(+)</text>
        <dbReference type="Rhea" id="RHEA:46164"/>
        <dbReference type="ChEBI" id="CHEBI:15378"/>
        <dbReference type="ChEBI" id="CHEBI:24646"/>
        <dbReference type="ChEBI" id="CHEBI:57783"/>
        <dbReference type="ChEBI" id="CHEBI:58349"/>
        <dbReference type="ChEBI" id="CHEBI:132124"/>
        <dbReference type="EC" id="1.6.5.2"/>
    </reaction>
</comment>
<comment type="catalytic activity">
    <reaction evidence="2">
        <text>Cr(6+) + 2 NADH + O2 = Cr(3+) + superoxide + 2 NAD(+) + 2 H(+)</text>
        <dbReference type="Rhea" id="RHEA:44372"/>
        <dbReference type="ChEBI" id="CHEBI:15378"/>
        <dbReference type="ChEBI" id="CHEBI:15379"/>
        <dbReference type="ChEBI" id="CHEBI:18421"/>
        <dbReference type="ChEBI" id="CHEBI:33007"/>
        <dbReference type="ChEBI" id="CHEBI:49544"/>
        <dbReference type="ChEBI" id="CHEBI:57540"/>
        <dbReference type="ChEBI" id="CHEBI:57945"/>
    </reaction>
</comment>
<comment type="catalytic activity">
    <reaction evidence="2">
        <text>Cr(6+) + 2 NADPH + O2 = Cr(3+) + superoxide + 2 NADP(+) + 2 H(+)</text>
        <dbReference type="Rhea" id="RHEA:44368"/>
        <dbReference type="ChEBI" id="CHEBI:15378"/>
        <dbReference type="ChEBI" id="CHEBI:15379"/>
        <dbReference type="ChEBI" id="CHEBI:18421"/>
        <dbReference type="ChEBI" id="CHEBI:33007"/>
        <dbReference type="ChEBI" id="CHEBI:49544"/>
        <dbReference type="ChEBI" id="CHEBI:57783"/>
        <dbReference type="ChEBI" id="CHEBI:58349"/>
    </reaction>
</comment>
<comment type="cofactor">
    <cofactor evidence="2">
        <name>FMN</name>
        <dbReference type="ChEBI" id="CHEBI:58210"/>
    </cofactor>
    <text evidence="1">Binds 1 FMN per subunit.</text>
</comment>
<comment type="activity regulation">
    <text evidence="2">May be inhibited by divalent cations.</text>
</comment>
<comment type="biophysicochemical properties">
    <kinetics>
        <KM evidence="3">110 uM for benzoquinone (at pH 7.5 and 70 degrees Celsius)</KM>
        <KM evidence="3">230 uM for menaquinone (at pH 8.0 and 60 degrees Celsius)</KM>
        <KM evidence="3">210 uM for duroquinone (at pH 8.0 and 70 degrees Celsius)</KM>
        <KM evidence="3">120 uM for coenzyme Q1 (at pH 8.5 and 60 degrees Celsius)</KM>
        <KM evidence="2">260 uM for chromate (at pH 5 and 70 degrees Celsius)</KM>
        <Vmax evidence="3">1400.0 umol/min/mg enzyme with benzoquinone as substrate (at pH 7.5 and 70 degrees Celsius)</Vmax>
        <Vmax evidence="3">660.0 umol/min/mg enzyme with menaquinone as substrate (at pH 8.0 and 60 degrees Celsius)</Vmax>
        <Vmax evidence="3">37.0 umol/min/mg enzyme with duroquinone as substrate (at pH 8.0 and 70 degrees Celsius)</Vmax>
        <Vmax evidence="3">9.6 umol/min/mg enzyme with coenzyme Q1 as substrate (at pH 8.5 and 60 degrees Celsius)</Vmax>
        <Vmax evidence="2">8.8 umol/min/mg enzyme with chromate as substrate (at pH 5 and 70 degrees Celsius)</Vmax>
        <text evidence="2 3">kcat is 930 sec(-1) with benzoquinone as substrate (at pH 7.5 and 70 degrees Celsius) (PubMed:15840577). kcat is 440 sec(-1) with menaquinone as substrate (at pH 8.0 and 60 degrees Celsius) (PubMed:15840577). kcat is 25 sec(-1) with duroquinone as substrate (at pH 8.0 and 70 degrees Celsius) (PubMed:15840577). kcat is 6.4 sec(-1) with coenzyme Q1 as substrate (at pH 8.5 and 60 degrees Celsius) (PubMed:15840577). kcat is 5.8 sec(-1) with chromate as substrate (at pH 5 and 70 degrees Celsius) (PubMed:14766567).</text>
    </kinetics>
    <phDependence>
        <text evidence="2">Optimum pH is 5 for chromate reductase activity.</text>
    </phDependence>
    <temperatureDependence>
        <text evidence="2">Optimum temperature is 70 degrees Celsius for chromate reductase activity.</text>
    </temperatureDependence>
</comment>
<comment type="subunit">
    <text evidence="1">Homotetramer. Dimer of dimers. The tetrameric configuration has a central role in chromate reductase activity.</text>
</comment>
<comment type="induction">
    <text evidence="2 3">Induced by H(2)O(2) (PubMed:15840577). Induced by both chromate and the stationary phase (PubMed:14766567).</text>
</comment>
<comment type="disruption phenotype">
    <text evidence="2">Cells lacking this gene are inhibited by chromate to a greater extent than the wild-type.</text>
</comment>
<comment type="similarity">
    <text evidence="5">Belongs to the SsuE family.</text>
</comment>